<evidence type="ECO:0000255" key="1">
    <source>
        <dbReference type="HAMAP-Rule" id="MF_01695"/>
    </source>
</evidence>
<gene>
    <name evidence="1" type="primary">mshA</name>
    <name type="ordered locus">Srot_2070</name>
</gene>
<comment type="function">
    <text evidence="1">Catalyzes the transfer of a N-acetyl-glucosamine moiety to 1D-myo-inositol 3-phosphate to produce 1D-myo-inositol 2-acetamido-2-deoxy-glucopyranoside 3-phosphate in the mycothiol biosynthesis pathway.</text>
</comment>
<comment type="catalytic activity">
    <reaction evidence="1">
        <text>1D-myo-inositol 3-phosphate + UDP-N-acetyl-alpha-D-glucosamine = 1D-myo-inositol 2-acetamido-2-deoxy-alpha-D-glucopyranoside 3-phosphate + UDP + H(+)</text>
        <dbReference type="Rhea" id="RHEA:26188"/>
        <dbReference type="ChEBI" id="CHEBI:15378"/>
        <dbReference type="ChEBI" id="CHEBI:57705"/>
        <dbReference type="ChEBI" id="CHEBI:58223"/>
        <dbReference type="ChEBI" id="CHEBI:58401"/>
        <dbReference type="ChEBI" id="CHEBI:58892"/>
        <dbReference type="EC" id="2.4.1.250"/>
    </reaction>
</comment>
<comment type="subunit">
    <text evidence="1">Homodimer.</text>
</comment>
<comment type="similarity">
    <text evidence="1">Belongs to the glycosyltransferase group 1 family. MshA subfamily.</text>
</comment>
<name>MSHA_SEGRD</name>
<reference key="1">
    <citation type="journal article" date="2010" name="Stand. Genomic Sci.">
        <title>Complete genome sequence of Segniliparus rotundus type strain (CDC 1076).</title>
        <authorList>
            <person name="Sikorski J."/>
            <person name="Lapidus A."/>
            <person name="Copeland A."/>
            <person name="Misra M."/>
            <person name="Glavina Del Rio T."/>
            <person name="Nolan M."/>
            <person name="Lucas S."/>
            <person name="Chen F."/>
            <person name="Tice H."/>
            <person name="Cheng J.F."/>
            <person name="Jando M."/>
            <person name="Schneider S."/>
            <person name="Bruce D."/>
            <person name="Goodwin L."/>
            <person name="Pitluck S."/>
            <person name="Liolios K."/>
            <person name="Mikhailova N."/>
            <person name="Pati A."/>
            <person name="Ivanova N."/>
            <person name="Mavromatis K."/>
            <person name="Chen A."/>
            <person name="Palaniappan K."/>
            <person name="Chertkov O."/>
            <person name="Land M."/>
            <person name="Hauser L."/>
            <person name="Chang Y.J."/>
            <person name="Jeffries C.D."/>
            <person name="Brettin T."/>
            <person name="Detter J.C."/>
            <person name="Han C."/>
            <person name="Rohde M."/>
            <person name="Goker M."/>
            <person name="Bristow J."/>
            <person name="Eisen J.A."/>
            <person name="Markowitz V."/>
            <person name="Hugenholtz P."/>
            <person name="Kyrpides N.C."/>
            <person name="Klenk H.P."/>
        </authorList>
    </citation>
    <scope>NUCLEOTIDE SEQUENCE [LARGE SCALE GENOMIC DNA]</scope>
    <source>
        <strain>ATCC BAA-972 / CDC 1076 / CIP 108378 / DSM 44985 / JCM 13578</strain>
    </source>
</reference>
<keyword id="KW-0328">Glycosyltransferase</keyword>
<keyword id="KW-0460">Magnesium</keyword>
<keyword id="KW-0479">Metal-binding</keyword>
<keyword id="KW-1185">Reference proteome</keyword>
<keyword id="KW-0808">Transferase</keyword>
<sequence>MAYPGGMAIPCQDTAAAPRPAAVSALPARSSPYLRRVAVLSLHTSPWAQPGTGDAGGMNVYIRNTSTVLARRGVAVEIFTRATSSDDPPSWEPVPGVTLHNVVAGPFEGLRKEELPSQLCAFTAGVLRECVGHEAWRHSLVHSHYWLSGQVGWLIKDRLGVPLVHTAHTLAAVKNVTLAEGDVPEPLQRLVGEGQLVAESDRMVANTQVEAGHLTQYYAADPQKIDVVPPGVDLGMFRPGDKAAARAELGLDPSEQVVAFVGRIQPLKGPDILLAAMAEVMRAKPGVRLLVVGEASGSGLSPEGIMATAERLGVADNVTMWPAQPPAQLAKVYRAADLVAVPSHSESFGLVAIEAQACGTPVVAAKVGGLPVAVADQVSGVLVDSWAPERWQAEIASLLAAPERLRAMGRAGVAHAGRFSWEATADGLLASYRAALRGGALAPMRAVRG</sequence>
<protein>
    <recommendedName>
        <fullName>D-inositol 3-phosphate glycosyltransferase</fullName>
        <ecNumber evidence="1">2.4.1.250</ecNumber>
    </recommendedName>
    <alternativeName>
        <fullName evidence="1">N-acetylglucosamine-inositol-phosphate N-acetylglucosaminyltransferase</fullName>
        <shortName evidence="1">GlcNAc-Ins-P N-acetylglucosaminyltransferase</shortName>
    </alternativeName>
</protein>
<proteinExistence type="inferred from homology"/>
<organism>
    <name type="scientific">Segniliparus rotundus (strain ATCC BAA-972 / CDC 1076 / CIP 108378 / DSM 44985 / JCM 13578)</name>
    <dbReference type="NCBI Taxonomy" id="640132"/>
    <lineage>
        <taxon>Bacteria</taxon>
        <taxon>Bacillati</taxon>
        <taxon>Actinomycetota</taxon>
        <taxon>Actinomycetes</taxon>
        <taxon>Mycobacteriales</taxon>
        <taxon>Segniliparaceae</taxon>
        <taxon>Segniliparus</taxon>
    </lineage>
</organism>
<accession>D6Z995</accession>
<dbReference type="EC" id="2.4.1.250" evidence="1"/>
<dbReference type="EMBL" id="CP001958">
    <property type="protein sequence ID" value="ADG98525.1"/>
    <property type="molecule type" value="Genomic_DNA"/>
</dbReference>
<dbReference type="SMR" id="D6Z995"/>
<dbReference type="STRING" id="640132.Srot_2070"/>
<dbReference type="CAZy" id="GT4">
    <property type="family name" value="Glycosyltransferase Family 4"/>
</dbReference>
<dbReference type="KEGG" id="srt:Srot_2070"/>
<dbReference type="eggNOG" id="COG0297">
    <property type="taxonomic scope" value="Bacteria"/>
</dbReference>
<dbReference type="HOGENOM" id="CLU_009583_2_3_11"/>
<dbReference type="OrthoDB" id="9810929at2"/>
<dbReference type="Proteomes" id="UP000002247">
    <property type="component" value="Chromosome"/>
</dbReference>
<dbReference type="GO" id="GO:0008375">
    <property type="term" value="F:acetylglucosaminyltransferase activity"/>
    <property type="evidence" value="ECO:0007669"/>
    <property type="project" value="UniProtKB-UniRule"/>
</dbReference>
<dbReference type="GO" id="GO:0102710">
    <property type="term" value="F:D-inositol-3-phosphate glycosyltransferase activity"/>
    <property type="evidence" value="ECO:0007669"/>
    <property type="project" value="UniProtKB-EC"/>
</dbReference>
<dbReference type="GO" id="GO:0000287">
    <property type="term" value="F:magnesium ion binding"/>
    <property type="evidence" value="ECO:0007669"/>
    <property type="project" value="UniProtKB-UniRule"/>
</dbReference>
<dbReference type="GO" id="GO:1903509">
    <property type="term" value="P:liposaccharide metabolic process"/>
    <property type="evidence" value="ECO:0007669"/>
    <property type="project" value="UniProtKB-ARBA"/>
</dbReference>
<dbReference type="GO" id="GO:0010125">
    <property type="term" value="P:mycothiol biosynthetic process"/>
    <property type="evidence" value="ECO:0007669"/>
    <property type="project" value="UniProtKB-UniRule"/>
</dbReference>
<dbReference type="Gene3D" id="3.40.50.2000">
    <property type="entry name" value="Glycogen Phosphorylase B"/>
    <property type="match status" value="2"/>
</dbReference>
<dbReference type="HAMAP" id="MF_01695">
    <property type="entry name" value="MshA"/>
    <property type="match status" value="1"/>
</dbReference>
<dbReference type="InterPro" id="IPR001296">
    <property type="entry name" value="Glyco_trans_1"/>
</dbReference>
<dbReference type="InterPro" id="IPR028098">
    <property type="entry name" value="Glyco_trans_4-like_N"/>
</dbReference>
<dbReference type="InterPro" id="IPR050194">
    <property type="entry name" value="Glycosyltransferase_grp1"/>
</dbReference>
<dbReference type="InterPro" id="IPR017814">
    <property type="entry name" value="Mycothiol_biosynthesis_MshA"/>
</dbReference>
<dbReference type="NCBIfam" id="TIGR03449">
    <property type="entry name" value="mycothiol_MshA"/>
    <property type="match status" value="1"/>
</dbReference>
<dbReference type="PANTHER" id="PTHR45947">
    <property type="entry name" value="SULFOQUINOVOSYL TRANSFERASE SQD2"/>
    <property type="match status" value="1"/>
</dbReference>
<dbReference type="PANTHER" id="PTHR45947:SF3">
    <property type="entry name" value="SULFOQUINOVOSYL TRANSFERASE SQD2"/>
    <property type="match status" value="1"/>
</dbReference>
<dbReference type="Pfam" id="PF13579">
    <property type="entry name" value="Glyco_trans_4_4"/>
    <property type="match status" value="1"/>
</dbReference>
<dbReference type="Pfam" id="PF00534">
    <property type="entry name" value="Glycos_transf_1"/>
    <property type="match status" value="1"/>
</dbReference>
<dbReference type="SUPFAM" id="SSF53756">
    <property type="entry name" value="UDP-Glycosyltransferase/glycogen phosphorylase"/>
    <property type="match status" value="1"/>
</dbReference>
<feature type="chain" id="PRO_0000400158" description="D-inositol 3-phosphate glycosyltransferase">
    <location>
        <begin position="1"/>
        <end position="449"/>
    </location>
</feature>
<feature type="binding site" evidence="1">
    <location>
        <position position="43"/>
    </location>
    <ligand>
        <name>1D-myo-inositol 3-phosphate</name>
        <dbReference type="ChEBI" id="CHEBI:58401"/>
    </ligand>
</feature>
<feature type="binding site" evidence="1">
    <location>
        <begin position="49"/>
        <end position="50"/>
    </location>
    <ligand>
        <name>UDP-N-acetyl-alpha-D-glucosamine</name>
        <dbReference type="ChEBI" id="CHEBI:57705"/>
    </ligand>
</feature>
<feature type="binding site" evidence="1">
    <location>
        <begin position="54"/>
        <end position="59"/>
    </location>
    <ligand>
        <name>1D-myo-inositol 3-phosphate</name>
        <dbReference type="ChEBI" id="CHEBI:58401"/>
    </ligand>
</feature>
<feature type="binding site" evidence="1">
    <location>
        <position position="57"/>
    </location>
    <ligand>
        <name>UDP-N-acetyl-alpha-D-glucosamine</name>
        <dbReference type="ChEBI" id="CHEBI:57705"/>
    </ligand>
</feature>
<feature type="binding site" evidence="1">
    <location>
        <position position="112"/>
    </location>
    <ligand>
        <name>1D-myo-inositol 3-phosphate</name>
        <dbReference type="ChEBI" id="CHEBI:58401"/>
    </ligand>
</feature>
<feature type="binding site" evidence="1">
    <location>
        <position position="145"/>
    </location>
    <ligand>
        <name>1D-myo-inositol 3-phosphate</name>
        <dbReference type="ChEBI" id="CHEBI:58401"/>
    </ligand>
</feature>
<feature type="binding site" evidence="1">
    <location>
        <position position="169"/>
    </location>
    <ligand>
        <name>1D-myo-inositol 3-phosphate</name>
        <dbReference type="ChEBI" id="CHEBI:58401"/>
    </ligand>
</feature>
<feature type="binding site" evidence="1">
    <location>
        <position position="189"/>
    </location>
    <ligand>
        <name>1D-myo-inositol 3-phosphate</name>
        <dbReference type="ChEBI" id="CHEBI:58401"/>
    </ligand>
</feature>
<feature type="binding site" evidence="1">
    <location>
        <position position="263"/>
    </location>
    <ligand>
        <name>UDP-N-acetyl-alpha-D-glucosamine</name>
        <dbReference type="ChEBI" id="CHEBI:57705"/>
    </ligand>
</feature>
<feature type="binding site" evidence="1">
    <location>
        <position position="268"/>
    </location>
    <ligand>
        <name>UDP-N-acetyl-alpha-D-glucosamine</name>
        <dbReference type="ChEBI" id="CHEBI:57705"/>
    </ligand>
</feature>
<feature type="binding site" evidence="1">
    <location>
        <position position="324"/>
    </location>
    <ligand>
        <name>UDP-N-acetyl-alpha-D-glucosamine</name>
        <dbReference type="ChEBI" id="CHEBI:57705"/>
    </ligand>
</feature>
<feature type="binding site" evidence="1">
    <location>
        <position position="333"/>
    </location>
    <ligand>
        <name>Mg(2+)</name>
        <dbReference type="ChEBI" id="CHEBI:18420"/>
    </ligand>
</feature>
<feature type="binding site" evidence="1">
    <location>
        <position position="334"/>
    </location>
    <ligand>
        <name>Mg(2+)</name>
        <dbReference type="ChEBI" id="CHEBI:18420"/>
    </ligand>
</feature>
<feature type="binding site" evidence="1">
    <location>
        <position position="336"/>
    </location>
    <ligand>
        <name>Mg(2+)</name>
        <dbReference type="ChEBI" id="CHEBI:18420"/>
    </ligand>
</feature>
<feature type="binding site" evidence="1">
    <location>
        <position position="346"/>
    </location>
    <ligand>
        <name>UDP-N-acetyl-alpha-D-glucosamine</name>
        <dbReference type="ChEBI" id="CHEBI:57705"/>
    </ligand>
</feature>
<feature type="binding site" evidence="1">
    <location>
        <position position="354"/>
    </location>
    <ligand>
        <name>UDP-N-acetyl-alpha-D-glucosamine</name>
        <dbReference type="ChEBI" id="CHEBI:57705"/>
    </ligand>
</feature>
<feature type="binding site" evidence="1">
    <location>
        <position position="360"/>
    </location>
    <ligand>
        <name>Mg(2+)</name>
        <dbReference type="ChEBI" id="CHEBI:18420"/>
    </ligand>
</feature>